<accession>Q9SSD2</accession>
<feature type="chain" id="PRO_0000436563" description="Pre-mRNA-processing-splicing factor 8A">
    <location>
        <begin position="1"/>
        <end position="2359"/>
    </location>
</feature>
<feature type="domain" description="MPN" evidence="2">
    <location>
        <begin position="2127"/>
        <end position="2258"/>
    </location>
</feature>
<feature type="region of interest" description="Disordered" evidence="3">
    <location>
        <begin position="1"/>
        <end position="54"/>
    </location>
</feature>
<feature type="compositionally biased region" description="Pro residues" evidence="3">
    <location>
        <begin position="33"/>
        <end position="45"/>
    </location>
</feature>
<gene>
    <name evidence="7" type="primary">PRP8A</name>
    <name evidence="9" type="synonym">EMB14</name>
    <name evidence="9" type="synonym">EMB177</name>
    <name evidence="9" type="synonym">EMB33</name>
    <name evidence="8" type="synonym">SOF81</name>
    <name evidence="9" type="synonym">SUS2</name>
    <name evidence="11" type="ordered locus">At1g80070</name>
    <name evidence="12" type="ORF">F18B13.15</name>
</gene>
<name>PRP8A_ARATH</name>
<keyword id="KW-0507">mRNA processing</keyword>
<keyword id="KW-0508">mRNA splicing</keyword>
<keyword id="KW-0539">Nucleus</keyword>
<keyword id="KW-1185">Reference proteome</keyword>
<keyword id="KW-0687">Ribonucleoprotein</keyword>
<keyword id="KW-0694">RNA-binding</keyword>
<keyword id="KW-0747">Spliceosome</keyword>
<evidence type="ECO:0000250" key="1">
    <source>
        <dbReference type="UniProtKB" id="Q6P2Q9"/>
    </source>
</evidence>
<evidence type="ECO:0000255" key="2">
    <source>
        <dbReference type="PROSITE-ProRule" id="PRU01182"/>
    </source>
</evidence>
<evidence type="ECO:0000256" key="3">
    <source>
        <dbReference type="SAM" id="MobiDB-lite"/>
    </source>
</evidence>
<evidence type="ECO:0000269" key="4">
    <source>
    </source>
</evidence>
<evidence type="ECO:0000269" key="5">
    <source>
    </source>
</evidence>
<evidence type="ECO:0000269" key="6">
    <source ref="3"/>
</evidence>
<evidence type="ECO:0000303" key="7">
    <source>
    </source>
</evidence>
<evidence type="ECO:0000303" key="8">
    <source>
    </source>
</evidence>
<evidence type="ECO:0000303" key="9">
    <source ref="3"/>
</evidence>
<evidence type="ECO:0000305" key="10"/>
<evidence type="ECO:0000312" key="11">
    <source>
        <dbReference type="Araport" id="AT1G80070"/>
    </source>
</evidence>
<evidence type="ECO:0000312" key="12">
    <source>
        <dbReference type="EMBL" id="AAD55467.1"/>
    </source>
</evidence>
<reference key="1">
    <citation type="journal article" date="2000" name="Nature">
        <title>Sequence and analysis of chromosome 1 of the plant Arabidopsis thaliana.</title>
        <authorList>
            <person name="Theologis A."/>
            <person name="Ecker J.R."/>
            <person name="Palm C.J."/>
            <person name="Federspiel N.A."/>
            <person name="Kaul S."/>
            <person name="White O."/>
            <person name="Alonso J."/>
            <person name="Altafi H."/>
            <person name="Araujo R."/>
            <person name="Bowman C.L."/>
            <person name="Brooks S.Y."/>
            <person name="Buehler E."/>
            <person name="Chan A."/>
            <person name="Chao Q."/>
            <person name="Chen H."/>
            <person name="Cheuk R.F."/>
            <person name="Chin C.W."/>
            <person name="Chung M.K."/>
            <person name="Conn L."/>
            <person name="Conway A.B."/>
            <person name="Conway A.R."/>
            <person name="Creasy T.H."/>
            <person name="Dewar K."/>
            <person name="Dunn P."/>
            <person name="Etgu P."/>
            <person name="Feldblyum T.V."/>
            <person name="Feng J.-D."/>
            <person name="Fong B."/>
            <person name="Fujii C.Y."/>
            <person name="Gill J.E."/>
            <person name="Goldsmith A.D."/>
            <person name="Haas B."/>
            <person name="Hansen N.F."/>
            <person name="Hughes B."/>
            <person name="Huizar L."/>
            <person name="Hunter J.L."/>
            <person name="Jenkins J."/>
            <person name="Johnson-Hopson C."/>
            <person name="Khan S."/>
            <person name="Khaykin E."/>
            <person name="Kim C.J."/>
            <person name="Koo H.L."/>
            <person name="Kremenetskaia I."/>
            <person name="Kurtz D.B."/>
            <person name="Kwan A."/>
            <person name="Lam B."/>
            <person name="Langin-Hooper S."/>
            <person name="Lee A."/>
            <person name="Lee J.M."/>
            <person name="Lenz C.A."/>
            <person name="Li J.H."/>
            <person name="Li Y.-P."/>
            <person name="Lin X."/>
            <person name="Liu S.X."/>
            <person name="Liu Z.A."/>
            <person name="Luros J.S."/>
            <person name="Maiti R."/>
            <person name="Marziali A."/>
            <person name="Militscher J."/>
            <person name="Miranda M."/>
            <person name="Nguyen M."/>
            <person name="Nierman W.C."/>
            <person name="Osborne B.I."/>
            <person name="Pai G."/>
            <person name="Peterson J."/>
            <person name="Pham P.K."/>
            <person name="Rizzo M."/>
            <person name="Rooney T."/>
            <person name="Rowley D."/>
            <person name="Sakano H."/>
            <person name="Salzberg S.L."/>
            <person name="Schwartz J.R."/>
            <person name="Shinn P."/>
            <person name="Southwick A.M."/>
            <person name="Sun H."/>
            <person name="Tallon L.J."/>
            <person name="Tambunga G."/>
            <person name="Toriumi M.J."/>
            <person name="Town C.D."/>
            <person name="Utterback T."/>
            <person name="Van Aken S."/>
            <person name="Vaysberg M."/>
            <person name="Vysotskaia V.S."/>
            <person name="Walker M."/>
            <person name="Wu D."/>
            <person name="Yu G."/>
            <person name="Fraser C.M."/>
            <person name="Venter J.C."/>
            <person name="Davis R.W."/>
        </authorList>
    </citation>
    <scope>NUCLEOTIDE SEQUENCE [LARGE SCALE GENOMIC DNA]</scope>
    <source>
        <strain>cv. Columbia</strain>
    </source>
</reference>
<reference key="2">
    <citation type="journal article" date="2017" name="Plant J.">
        <title>Araport11: a complete reannotation of the Arabidopsis thaliana reference genome.</title>
        <authorList>
            <person name="Cheng C.Y."/>
            <person name="Krishnakumar V."/>
            <person name="Chan A.P."/>
            <person name="Thibaud-Nissen F."/>
            <person name="Schobel S."/>
            <person name="Town C.D."/>
        </authorList>
    </citation>
    <scope>GENOME REANNOTATION</scope>
    <source>
        <strain>cv. Columbia</strain>
    </source>
</reference>
<reference key="3">
    <citation type="journal article" date="1994" name="Development">
        <title>Disruption of morphogenesis and transformation of the suspensor in abnormal suspensor mutants of Arabidopsis.</title>
        <authorList>
            <person name="Schwartz B.W."/>
            <person name="Yeung E.C."/>
            <person name="Meinke D.W."/>
        </authorList>
    </citation>
    <scope>DISRUPTION PHENOTYPE</scope>
</reference>
<reference key="4">
    <citation type="journal article" date="2009" name="J. Integr. Plant Biol.">
        <title>GAMETOPHYTIC FACTOR 1, involved in pre-mRNA splicing, is essential for megagametogenesis and embryogenesis in Arabidopsis.</title>
        <authorList>
            <person name="Liu M."/>
            <person name="Yuan L."/>
            <person name="Liu N.Y."/>
            <person name="Shi D.Q."/>
            <person name="Liu J."/>
            <person name="Yang W.C."/>
        </authorList>
    </citation>
    <scope>INTERACTION WITH CLO</scope>
</reference>
<reference key="5">
    <citation type="journal article" date="2014" name="Mol. Cell">
        <title>Functional consequences of splicing of the antisense transcript COOLAIR on FLC transcription.</title>
        <authorList>
            <person name="Marquardt S."/>
            <person name="Raitskin O."/>
            <person name="Wu Z."/>
            <person name="Liu F."/>
            <person name="Sun Q."/>
            <person name="Dean C."/>
        </authorList>
    </citation>
    <scope>FUNCTION</scope>
</reference>
<dbReference type="EMBL" id="AC009322">
    <property type="protein sequence ID" value="AAD55467.1"/>
    <property type="molecule type" value="Genomic_DNA"/>
</dbReference>
<dbReference type="EMBL" id="CP002684">
    <property type="protein sequence ID" value="AEE36353.1"/>
    <property type="molecule type" value="Genomic_DNA"/>
</dbReference>
<dbReference type="PIR" id="B96832">
    <property type="entry name" value="B96832"/>
</dbReference>
<dbReference type="RefSeq" id="NP_178124.2">
    <property type="nucleotide sequence ID" value="NM_106656.4"/>
</dbReference>
<dbReference type="SMR" id="Q9SSD2"/>
<dbReference type="FunCoup" id="Q9SSD2">
    <property type="interactions" value="5055"/>
</dbReference>
<dbReference type="IntAct" id="Q9SSD2">
    <property type="interactions" value="4"/>
</dbReference>
<dbReference type="STRING" id="3702.Q9SSD2"/>
<dbReference type="GlyGen" id="Q9SSD2">
    <property type="glycosylation" value="3 sites, 1 O-linked glycan (1 site)"/>
</dbReference>
<dbReference type="iPTMnet" id="Q9SSD2"/>
<dbReference type="PaxDb" id="3702-AT1G80070.1"/>
<dbReference type="ProteomicsDB" id="226294"/>
<dbReference type="EnsemblPlants" id="AT1G80070.1">
    <property type="protein sequence ID" value="AT1G80070.1"/>
    <property type="gene ID" value="AT1G80070"/>
</dbReference>
<dbReference type="GeneID" id="844347"/>
<dbReference type="Gramene" id="AT1G80070.1">
    <property type="protein sequence ID" value="AT1G80070.1"/>
    <property type="gene ID" value="AT1G80070"/>
</dbReference>
<dbReference type="KEGG" id="ath:AT1G80070"/>
<dbReference type="Araport" id="AT1G80070"/>
<dbReference type="TAIR" id="AT1G80070">
    <property type="gene designation" value="SUS2"/>
</dbReference>
<dbReference type="eggNOG" id="KOG1795">
    <property type="taxonomic scope" value="Eukaryota"/>
</dbReference>
<dbReference type="HOGENOM" id="CLU_000380_3_0_1"/>
<dbReference type="InParanoid" id="Q9SSD2"/>
<dbReference type="OMA" id="ANKWNTS"/>
<dbReference type="PhylomeDB" id="Q9SSD2"/>
<dbReference type="CD-CODE" id="4299E36E">
    <property type="entry name" value="Nucleolus"/>
</dbReference>
<dbReference type="PRO" id="PR:Q9SSD2"/>
<dbReference type="Proteomes" id="UP000006548">
    <property type="component" value="Chromosome 1"/>
</dbReference>
<dbReference type="ExpressionAtlas" id="Q9SSD2">
    <property type="expression patterns" value="baseline and differential"/>
</dbReference>
<dbReference type="GO" id="GO:0005739">
    <property type="term" value="C:mitochondrion"/>
    <property type="evidence" value="ECO:0007005"/>
    <property type="project" value="TAIR"/>
</dbReference>
<dbReference type="GO" id="GO:0005681">
    <property type="term" value="C:spliceosomal complex"/>
    <property type="evidence" value="ECO:0007669"/>
    <property type="project" value="UniProtKB-KW"/>
</dbReference>
<dbReference type="GO" id="GO:0008237">
    <property type="term" value="F:metallopeptidase activity"/>
    <property type="evidence" value="ECO:0007669"/>
    <property type="project" value="InterPro"/>
</dbReference>
<dbReference type="GO" id="GO:0030623">
    <property type="term" value="F:U5 snRNA binding"/>
    <property type="evidence" value="ECO:0007669"/>
    <property type="project" value="InterPro"/>
</dbReference>
<dbReference type="GO" id="GO:0017070">
    <property type="term" value="F:U6 snRNA binding"/>
    <property type="evidence" value="ECO:0007669"/>
    <property type="project" value="InterPro"/>
</dbReference>
<dbReference type="GO" id="GO:0000380">
    <property type="term" value="P:alternative mRNA splicing, via spliceosome"/>
    <property type="evidence" value="ECO:0000315"/>
    <property type="project" value="TAIR"/>
</dbReference>
<dbReference type="GO" id="GO:0000398">
    <property type="term" value="P:mRNA splicing, via spliceosome"/>
    <property type="evidence" value="ECO:0000315"/>
    <property type="project" value="UniProtKB"/>
</dbReference>
<dbReference type="CDD" id="cd08056">
    <property type="entry name" value="MPN_PRP8"/>
    <property type="match status" value="1"/>
</dbReference>
<dbReference type="CDD" id="cd13838">
    <property type="entry name" value="RNase_H_like_Prp8_IV"/>
    <property type="match status" value="1"/>
</dbReference>
<dbReference type="FunFam" id="1.20.80.40:FF:000001">
    <property type="entry name" value="Pre-mRNA-processing-splicing factor 8"/>
    <property type="match status" value="1"/>
</dbReference>
<dbReference type="FunFam" id="3.30.420.230:FF:000003">
    <property type="entry name" value="Pre-mRNA-processing-splicing factor 8"/>
    <property type="match status" value="1"/>
</dbReference>
<dbReference type="FunFam" id="3.30.43.40:FF:000001">
    <property type="entry name" value="Pre-mRNA-processing-splicing factor 8"/>
    <property type="match status" value="1"/>
</dbReference>
<dbReference type="FunFam" id="3.40.140.10:FF:000002">
    <property type="entry name" value="Pre-mRNA-processing-splicing factor 8"/>
    <property type="match status" value="1"/>
</dbReference>
<dbReference type="FunFam" id="3.90.1570.40:FF:000001">
    <property type="entry name" value="Pre-mRNA-processing-splicing factor 8"/>
    <property type="match status" value="1"/>
</dbReference>
<dbReference type="Gene3D" id="1.20.80.40">
    <property type="match status" value="1"/>
</dbReference>
<dbReference type="Gene3D" id="3.30.420.230">
    <property type="match status" value="1"/>
</dbReference>
<dbReference type="Gene3D" id="3.90.1570.40">
    <property type="match status" value="1"/>
</dbReference>
<dbReference type="Gene3D" id="3.40.140.10">
    <property type="entry name" value="Cytidine Deaminase, domain 2"/>
    <property type="match status" value="1"/>
</dbReference>
<dbReference type="Gene3D" id="3.30.43.40">
    <property type="entry name" value="Pre-mRNA-processing-splicing factor 8, U5-snRNA-binding domain"/>
    <property type="match status" value="1"/>
</dbReference>
<dbReference type="InterPro" id="IPR000555">
    <property type="entry name" value="JAMM/MPN+_dom"/>
</dbReference>
<dbReference type="InterPro" id="IPR037518">
    <property type="entry name" value="MPN"/>
</dbReference>
<dbReference type="InterPro" id="IPR012591">
    <property type="entry name" value="PRO8NT"/>
</dbReference>
<dbReference type="InterPro" id="IPR012592">
    <property type="entry name" value="PROCN"/>
</dbReference>
<dbReference type="InterPro" id="IPR012984">
    <property type="entry name" value="PROCT"/>
</dbReference>
<dbReference type="InterPro" id="IPR027652">
    <property type="entry name" value="PRP8"/>
</dbReference>
<dbReference type="InterPro" id="IPR021983">
    <property type="entry name" value="PRP8_domainIV"/>
</dbReference>
<dbReference type="InterPro" id="IPR043173">
    <property type="entry name" value="Prp8_domainIV_fingers"/>
</dbReference>
<dbReference type="InterPro" id="IPR043172">
    <property type="entry name" value="Prp8_domainIV_palm"/>
</dbReference>
<dbReference type="InterPro" id="IPR019581">
    <property type="entry name" value="Prp8_U5-snRNA-bd"/>
</dbReference>
<dbReference type="InterPro" id="IPR042516">
    <property type="entry name" value="Prp8_U5-snRNA-bd_sf"/>
</dbReference>
<dbReference type="InterPro" id="IPR019580">
    <property type="entry name" value="Prp8_U6-snRNA-bd"/>
</dbReference>
<dbReference type="InterPro" id="IPR012337">
    <property type="entry name" value="RNaseH-like_sf"/>
</dbReference>
<dbReference type="InterPro" id="IPR019582">
    <property type="entry name" value="RRM_spliceosomal_PrP8"/>
</dbReference>
<dbReference type="PANTHER" id="PTHR11140">
    <property type="entry name" value="PRE-MRNA SPLICING FACTOR PRP8"/>
    <property type="match status" value="1"/>
</dbReference>
<dbReference type="PANTHER" id="PTHR11140:SF0">
    <property type="entry name" value="PRE-MRNA-PROCESSING-SPLICING FACTOR 8"/>
    <property type="match status" value="1"/>
</dbReference>
<dbReference type="Pfam" id="PF01398">
    <property type="entry name" value="JAB"/>
    <property type="match status" value="1"/>
</dbReference>
<dbReference type="Pfam" id="PF08082">
    <property type="entry name" value="PRO8NT"/>
    <property type="match status" value="1"/>
</dbReference>
<dbReference type="Pfam" id="PF08083">
    <property type="entry name" value="PROCN"/>
    <property type="match status" value="1"/>
</dbReference>
<dbReference type="Pfam" id="PF08084">
    <property type="entry name" value="PROCT"/>
    <property type="match status" value="1"/>
</dbReference>
<dbReference type="Pfam" id="PF12134">
    <property type="entry name" value="PRP8_domainIV"/>
    <property type="match status" value="1"/>
</dbReference>
<dbReference type="Pfam" id="PF10598">
    <property type="entry name" value="RRM_4"/>
    <property type="match status" value="1"/>
</dbReference>
<dbReference type="Pfam" id="PF10597">
    <property type="entry name" value="U5_2-snRNA_bdg"/>
    <property type="match status" value="1"/>
</dbReference>
<dbReference type="Pfam" id="PF10596">
    <property type="entry name" value="U6-snRNA_bdg"/>
    <property type="match status" value="1"/>
</dbReference>
<dbReference type="SMART" id="SM00232">
    <property type="entry name" value="JAB_MPN"/>
    <property type="match status" value="1"/>
</dbReference>
<dbReference type="SUPFAM" id="SSF53098">
    <property type="entry name" value="Ribonuclease H-like"/>
    <property type="match status" value="2"/>
</dbReference>
<dbReference type="PROSITE" id="PS50249">
    <property type="entry name" value="MPN"/>
    <property type="match status" value="1"/>
</dbReference>
<sequence>MWNNNDGMPLAPPGTGGSMMPPPPAAHPSYTALPPPSNPTPPVEPTPEEAEAKLEEKARKWMQLNSKRYGDKRKFGFVETQKEDMPPEHVRKIIRDHGDMSSKKFRHDKRVYLGALKFVPHAVFKLLENMPMPWEQVRDVKVLYHITGAITFVNEIPWVVEPIYMAQWGTMWIMMRREKRDRRHFKRMRFPPFDDEEPPLDYADNLLDVDPLEPIQLELDEEEDSAVHTWFYDHKPLVKTKLINGPSYRRWNLSLPIMATLHRLAGQLLSDLIDRNYFYLFDMPSFFTAKALNMCIPGGPKFEPLYRDMEKGDEDWNEFNDINKLIIRSPLRTEYRIAFPHLYNNRPRKVKLCVYHSPMIMYIKTEDPDLPAFYYDPLIHPISNTNKEKRERKVYDDEDDFALPEGVEPLLRDTQLYTDTTAAGISLLFAPRPFNMRSGRTRRAEDIPLVSEWFKEHCPPAYPVKVRVSYQKLLKCYVLNELHHRPPKAQKKKHLFRSLAATKFFQSTELDWVEVGLQVCRQGYNMLNLLIHRKNLNYLHLDYNFNLKPVKTLTTKERKKSRFGNAFHLCREILRLTKLVVDANVQFRLGNVDAFQLADGLQYIFSHVGQLTGMYRYKYRLMRQIRMCKDLKHLIYYRFNTGPVGKGPGCGFWAPMWRVWLFFLRGIVPLLERWLGNLLARQFEGRHSKGVAKTVTKQRVESHFDLELRAAVMHDVLDAMPEGIKQNKARTILQHLSEAWRCWKANIPWKVPGLPVPIENMILRYVKSKADWWTNVAHYNRERIRRGATVDKTVCRKNLGRLTRLWLKAEQERQHNYLKDGPYVTPEEALAIYTTTVHWLESRKFSPIPFPPLSYKHDTKLLILALERLKESYSVAVRLNQQQREELGLIEQAYDNPHEALSRIKRHLLTQRGFKEVGIEFMDLYSYLIPVYEIEPLEKITDAYLDQYLWYEGDKRHLFPNWIKPADSEPPPLLVYKWCQGINNLQGIWDTGDGQCVVMLQTKFEKFFEKIDLTMLNRLLRLVLDHNIADYVSAKNNVVLSYKDMSHTNSYGLIRGLQFASFVVQFYGLLLDLLLLGLTRASEIAGPPQMPNEFMTFWDTKVETRHPIRLYSRYIDKVHIMFKFTHEEARDLIQRYLTEHPDPNNENMVGYNNKKCWPRDARMRLMKHDVNLGRSVFWDMKNRLPRSITTLEWENGFVSVYSKDNPNLLFSMCGFEVRILPKIRMTQEAFSNTKDGVWNLQNEQTKERTAVAFLRVDDEHMKVFENRVRQILMSSGSTTFTKIVNKWNTALIGLMTYFREATVHTQELLDLLVKCENKIQTRIKIGLNSKMPSRFPPVIFYTPKEIGGLGMLSMGHILIPQSDLRYSKQTDVGVTHFRSGMSHEEDQLIPNLYRYIQPWESEFIDSQRVWAEYALKRQEAQAQNRRLTLEDLEDSWDRGIPRINTLFQKDRHTLAYDKGWRVRTDFKQYQVLKQNPFWWTHQRHDGKLWNLNNYRTDVIQALGGVEGILEHTLFKGTYFPTWEGLFWEKASGFEESMKYKKLTNAQRSGLNQIPNRRFTLWWSPTINRANVYVGFQVQLDLTGIFMHGKIPTLKISLIQIFRAHLWQKIHESVVMDLCQVLDQELDALEIETVQKETIHPRKSYKMNSSCADVLLFAAHKWPMSKPSLVAESKDMFDQKASNKYWIDVQLRWGDYDSHDIERYTRAKFMDYTTDNMSIYPSPTGVMIGLDLAYNLHSAFGNWFPGSKPLLAQAMNKIMKSNPALYVLRERIRKGLQLYSSEPTEPYLSSQNYGEIFSNQIIWFVDDTNVYRVTIHKTFEGNLTTKPINGAIFIFNPRTGQLFLKVIHTSVWAGQKRLGQLAKWKTAEEVAALVRSLPVEEQPKQIIVTRKGMLDPLEVHLLDFPNIVIKGSELQLPFQACLKIEKFGDLILKATEPQMVLFNIYDDWLKSISSYTAFSRLILILRALHVNNEKAKMLLKPDKSVVTEPHHIWPSLTDDQWMKVEVALRDLILSDYAKKNNVNTSALTQSEIRDIILGAEITPPSQQRQQIAEIEKQAKEASQLTAVTTRTTNVHGDELIVTTTSPYEQSAFGSKTDWRVRAISATNLYLRVNHIYVNSDDIKETGYTYIMPKNILKKFICVADLRTQIAGYLYGISPPDNPQVKEIRCVVMVPQWGNHQLVHLPSSLPEHDFLNDLEPLGWLHTQPNELPQLSPQDVTSHSRILENNKQWDGEKCIILTCSFTPGSCSLTSYKLTQTGYEWGRLNKDNGSNPHGYLPTHYEKVQMLLSDRFLGFYMVPESGPWNYSFTGVKHTLSMKYSVKLGSPKEFYHEEHRPTHFLEFSNMEEADITEGDREDTFT</sequence>
<protein>
    <recommendedName>
        <fullName evidence="10">Pre-mRNA-processing-splicing factor 8A</fullName>
    </recommendedName>
    <alternativeName>
        <fullName evidence="10">PRP8 homolog A</fullName>
        <shortName evidence="7">AtPRP8A</shortName>
    </alternativeName>
    <alternativeName>
        <fullName evidence="9">Protein ABNORMAL SUSPENSOR 2</fullName>
    </alternativeName>
    <alternativeName>
        <fullName evidence="9">Protein EMBRYO DEFECTIVE 14</fullName>
    </alternativeName>
    <alternativeName>
        <fullName evidence="9">Protein EMBRYO DEFECTIVE 177</fullName>
    </alternativeName>
    <alternativeName>
        <fullName evidence="9">Protein EMBRYO DEFECTIVE 33</fullName>
    </alternativeName>
    <alternativeName>
        <fullName evidence="8">Protein SUPPRESSOR OF OVEREXPRESSED FCA 81</fullName>
    </alternativeName>
</protein>
<organism>
    <name type="scientific">Arabidopsis thaliana</name>
    <name type="common">Mouse-ear cress</name>
    <dbReference type="NCBI Taxonomy" id="3702"/>
    <lineage>
        <taxon>Eukaryota</taxon>
        <taxon>Viridiplantae</taxon>
        <taxon>Streptophyta</taxon>
        <taxon>Embryophyta</taxon>
        <taxon>Tracheophyta</taxon>
        <taxon>Spermatophyta</taxon>
        <taxon>Magnoliopsida</taxon>
        <taxon>eudicotyledons</taxon>
        <taxon>Gunneridae</taxon>
        <taxon>Pentapetalae</taxon>
        <taxon>rosids</taxon>
        <taxon>malvids</taxon>
        <taxon>Brassicales</taxon>
        <taxon>Brassicaceae</taxon>
        <taxon>Camelineae</taxon>
        <taxon>Arabidopsis</taxon>
    </lineage>
</organism>
<comment type="function">
    <text evidence="1 5 6">Functions as a scaffold that mediates the ordered assembly of spliceosomal proteins and snRNAs. Required for the assembly of the U4/U6-U5 tri-snRNP complex (By similarity). Required for embryo development (Ref.3). Required for splicing efficiency of COOLAIR introns and usage of the proximal poly(A) site. COOLAIR is a set of long non-coding antisense transcripts produced at the FLOWERING LOCUS C (FLC). COOLAIR initiates just downstream of the major sense transcript poly(A) site and terminates either early or extends into the FLC promoter region. Splicing of COOLAIR by PRP8A is functionally important for FLC regulation (PubMed:24725596).</text>
</comment>
<comment type="subunit">
    <text evidence="4">Interacts with CLO.</text>
</comment>
<comment type="subcellular location">
    <subcellularLocation>
        <location evidence="10">Nucleus</location>
    </subcellularLocation>
</comment>
<comment type="disruption phenotype">
    <text evidence="6">Embryonic lethality due to abnormal suspensor development.</text>
</comment>
<proteinExistence type="evidence at protein level"/>